<reference key="1">
    <citation type="journal article" date="2002" name="Nat. Biotechnol.">
        <title>Genome sequence of the dissimilatory metal ion-reducing bacterium Shewanella oneidensis.</title>
        <authorList>
            <person name="Heidelberg J.F."/>
            <person name="Paulsen I.T."/>
            <person name="Nelson K.E."/>
            <person name="Gaidos E.J."/>
            <person name="Nelson W.C."/>
            <person name="Read T.D."/>
            <person name="Eisen J.A."/>
            <person name="Seshadri R."/>
            <person name="Ward N.L."/>
            <person name="Methe B.A."/>
            <person name="Clayton R.A."/>
            <person name="Meyer T."/>
            <person name="Tsapin A."/>
            <person name="Scott J."/>
            <person name="Beanan M.J."/>
            <person name="Brinkac L.M."/>
            <person name="Daugherty S.C."/>
            <person name="DeBoy R.T."/>
            <person name="Dodson R.J."/>
            <person name="Durkin A.S."/>
            <person name="Haft D.H."/>
            <person name="Kolonay J.F."/>
            <person name="Madupu R."/>
            <person name="Peterson J.D."/>
            <person name="Umayam L.A."/>
            <person name="White O."/>
            <person name="Wolf A.M."/>
            <person name="Vamathevan J.J."/>
            <person name="Weidman J.F."/>
            <person name="Impraim M."/>
            <person name="Lee K."/>
            <person name="Berry K.J."/>
            <person name="Lee C."/>
            <person name="Mueller J."/>
            <person name="Khouri H.M."/>
            <person name="Gill J."/>
            <person name="Utterback T.R."/>
            <person name="McDonald L.A."/>
            <person name="Feldblyum T.V."/>
            <person name="Smith H.O."/>
            <person name="Venter J.C."/>
            <person name="Nealson K.H."/>
            <person name="Fraser C.M."/>
        </authorList>
    </citation>
    <scope>NUCLEOTIDE SEQUENCE [LARGE SCALE GENOMIC DNA]</scope>
    <source>
        <strain>ATCC 700550 / JCM 31522 / CIP 106686 / LMG 19005 / NCIMB 14063 / MR-1</strain>
    </source>
</reference>
<proteinExistence type="inferred from homology"/>
<protein>
    <recommendedName>
        <fullName evidence="2">D-alanine--D-alanine ligase</fullName>
        <ecNumber evidence="2">6.3.2.4</ecNumber>
    </recommendedName>
    <alternativeName>
        <fullName evidence="2">D-Ala-D-Ala ligase</fullName>
    </alternativeName>
    <alternativeName>
        <fullName evidence="2">D-alanylalanine synthetase</fullName>
    </alternativeName>
</protein>
<organism>
    <name type="scientific">Shewanella oneidensis (strain ATCC 700550 / JCM 31522 / CIP 106686 / LMG 19005 / NCIMB 14063 / MR-1)</name>
    <dbReference type="NCBI Taxonomy" id="211586"/>
    <lineage>
        <taxon>Bacteria</taxon>
        <taxon>Pseudomonadati</taxon>
        <taxon>Pseudomonadota</taxon>
        <taxon>Gammaproteobacteria</taxon>
        <taxon>Alteromonadales</taxon>
        <taxon>Shewanellaceae</taxon>
        <taxon>Shewanella</taxon>
    </lineage>
</organism>
<gene>
    <name evidence="2" type="primary">ddl</name>
    <name type="synonym">ddlA</name>
    <name type="ordered locus">SO_2217</name>
</gene>
<comment type="function">
    <text evidence="2">Cell wall formation.</text>
</comment>
<comment type="catalytic activity">
    <reaction evidence="2">
        <text>2 D-alanine + ATP = D-alanyl-D-alanine + ADP + phosphate + H(+)</text>
        <dbReference type="Rhea" id="RHEA:11224"/>
        <dbReference type="ChEBI" id="CHEBI:15378"/>
        <dbReference type="ChEBI" id="CHEBI:30616"/>
        <dbReference type="ChEBI" id="CHEBI:43474"/>
        <dbReference type="ChEBI" id="CHEBI:57416"/>
        <dbReference type="ChEBI" id="CHEBI:57822"/>
        <dbReference type="ChEBI" id="CHEBI:456216"/>
        <dbReference type="EC" id="6.3.2.4"/>
    </reaction>
</comment>
<comment type="cofactor">
    <cofactor evidence="1">
        <name>Mg(2+)</name>
        <dbReference type="ChEBI" id="CHEBI:18420"/>
    </cofactor>
    <cofactor evidence="1">
        <name>Mn(2+)</name>
        <dbReference type="ChEBI" id="CHEBI:29035"/>
    </cofactor>
    <text evidence="1">Binds 2 magnesium or manganese ions per subunit.</text>
</comment>
<comment type="pathway">
    <text evidence="2">Cell wall biogenesis; peptidoglycan biosynthesis.</text>
</comment>
<comment type="subcellular location">
    <subcellularLocation>
        <location evidence="2">Cytoplasm</location>
    </subcellularLocation>
</comment>
<comment type="similarity">
    <text evidence="2">Belongs to the D-alanine--D-alanine ligase family.</text>
</comment>
<feature type="chain" id="PRO_0000177871" description="D-alanine--D-alanine ligase">
    <location>
        <begin position="1"/>
        <end position="336"/>
    </location>
</feature>
<feature type="domain" description="ATP-grasp" evidence="2">
    <location>
        <begin position="124"/>
        <end position="330"/>
    </location>
</feature>
<feature type="binding site" evidence="2">
    <location>
        <begin position="154"/>
        <end position="209"/>
    </location>
    <ligand>
        <name>ATP</name>
        <dbReference type="ChEBI" id="CHEBI:30616"/>
    </ligand>
</feature>
<feature type="binding site" evidence="2">
    <location>
        <position position="284"/>
    </location>
    <ligand>
        <name>Mg(2+)</name>
        <dbReference type="ChEBI" id="CHEBI:18420"/>
        <label>1</label>
    </ligand>
</feature>
<feature type="binding site" evidence="2">
    <location>
        <position position="297"/>
    </location>
    <ligand>
        <name>Mg(2+)</name>
        <dbReference type="ChEBI" id="CHEBI:18420"/>
        <label>1</label>
    </ligand>
</feature>
<feature type="binding site" evidence="2">
    <location>
        <position position="297"/>
    </location>
    <ligand>
        <name>Mg(2+)</name>
        <dbReference type="ChEBI" id="CHEBI:18420"/>
        <label>2</label>
    </ligand>
</feature>
<feature type="binding site" evidence="2">
    <location>
        <position position="299"/>
    </location>
    <ligand>
        <name>Mg(2+)</name>
        <dbReference type="ChEBI" id="CHEBI:18420"/>
        <label>2</label>
    </ligand>
</feature>
<accession>Q8EEZ2</accession>
<sequence>MSKINLLLLCGGGSAEHDISLLSANYFETSLAKSEQFNVLRVVLDKFGQYQTAAGDDCELTNNREIRFRDESKAPWPVDYVIPCIHGYPGETGDIQSYFNLIQLPYFGCESEASSNCFNKITAKMWFSALGIPNTPYIFLNQYDDEAIAQTQAALEKWGSIFVKAASQGSSVGCYKVDEASKVLGVLKDAFGYAPYVIVEKTIKARELEVAVYEYQGEVIATLPGEIICDSNTFYTFDEKYAKSSKARTDVVAQNVPTDISDQIRAYAIKAFKGMKLRHLSRIDFFLTADNEILLNEINTFPGSTPISMFPKMLQNHGHDFTQYLSLVINSQLAAK</sequence>
<keyword id="KW-0067">ATP-binding</keyword>
<keyword id="KW-0133">Cell shape</keyword>
<keyword id="KW-0961">Cell wall biogenesis/degradation</keyword>
<keyword id="KW-0963">Cytoplasm</keyword>
<keyword id="KW-0436">Ligase</keyword>
<keyword id="KW-0460">Magnesium</keyword>
<keyword id="KW-0464">Manganese</keyword>
<keyword id="KW-0479">Metal-binding</keyword>
<keyword id="KW-0547">Nucleotide-binding</keyword>
<keyword id="KW-0573">Peptidoglycan synthesis</keyword>
<keyword id="KW-1185">Reference proteome</keyword>
<name>DDL_SHEON</name>
<dbReference type="EC" id="6.3.2.4" evidence="2"/>
<dbReference type="EMBL" id="AE014299">
    <property type="protein sequence ID" value="AAN55258.1"/>
    <property type="molecule type" value="Genomic_DNA"/>
</dbReference>
<dbReference type="RefSeq" id="NP_717814.1">
    <property type="nucleotide sequence ID" value="NC_004347.2"/>
</dbReference>
<dbReference type="RefSeq" id="WP_011072241.1">
    <property type="nucleotide sequence ID" value="NC_004347.2"/>
</dbReference>
<dbReference type="SMR" id="Q8EEZ2"/>
<dbReference type="STRING" id="211586.SO_2217"/>
<dbReference type="PaxDb" id="211586-SO_2217"/>
<dbReference type="KEGG" id="son:SO_2217"/>
<dbReference type="PATRIC" id="fig|1028802.3.peg.1771"/>
<dbReference type="eggNOG" id="COG1181">
    <property type="taxonomic scope" value="Bacteria"/>
</dbReference>
<dbReference type="HOGENOM" id="CLU_039268_0_0_6"/>
<dbReference type="OrthoDB" id="9813261at2"/>
<dbReference type="PhylomeDB" id="Q8EEZ2"/>
<dbReference type="BioCyc" id="SONE211586:G1GMP-2030-MONOMER"/>
<dbReference type="UniPathway" id="UPA00219"/>
<dbReference type="Proteomes" id="UP000008186">
    <property type="component" value="Chromosome"/>
</dbReference>
<dbReference type="GO" id="GO:0005829">
    <property type="term" value="C:cytosol"/>
    <property type="evidence" value="ECO:0000318"/>
    <property type="project" value="GO_Central"/>
</dbReference>
<dbReference type="GO" id="GO:0005524">
    <property type="term" value="F:ATP binding"/>
    <property type="evidence" value="ECO:0007669"/>
    <property type="project" value="UniProtKB-KW"/>
</dbReference>
<dbReference type="GO" id="GO:0008716">
    <property type="term" value="F:D-alanine-D-alanine ligase activity"/>
    <property type="evidence" value="ECO:0000318"/>
    <property type="project" value="GO_Central"/>
</dbReference>
<dbReference type="GO" id="GO:0046872">
    <property type="term" value="F:metal ion binding"/>
    <property type="evidence" value="ECO:0007669"/>
    <property type="project" value="UniProtKB-KW"/>
</dbReference>
<dbReference type="GO" id="GO:0071555">
    <property type="term" value="P:cell wall organization"/>
    <property type="evidence" value="ECO:0007669"/>
    <property type="project" value="UniProtKB-KW"/>
</dbReference>
<dbReference type="GO" id="GO:0009252">
    <property type="term" value="P:peptidoglycan biosynthetic process"/>
    <property type="evidence" value="ECO:0000318"/>
    <property type="project" value="GO_Central"/>
</dbReference>
<dbReference type="GO" id="GO:0008360">
    <property type="term" value="P:regulation of cell shape"/>
    <property type="evidence" value="ECO:0007669"/>
    <property type="project" value="UniProtKB-KW"/>
</dbReference>
<dbReference type="FunFam" id="3.40.50.20:FF:000034">
    <property type="entry name" value="D-alanine--D-alanine ligase"/>
    <property type="match status" value="1"/>
</dbReference>
<dbReference type="Gene3D" id="3.40.50.20">
    <property type="match status" value="1"/>
</dbReference>
<dbReference type="Gene3D" id="3.30.1490.20">
    <property type="entry name" value="ATP-grasp fold, A domain"/>
    <property type="match status" value="1"/>
</dbReference>
<dbReference type="Gene3D" id="3.30.470.20">
    <property type="entry name" value="ATP-grasp fold, B domain"/>
    <property type="match status" value="1"/>
</dbReference>
<dbReference type="HAMAP" id="MF_00047">
    <property type="entry name" value="Dala_Dala_lig"/>
    <property type="match status" value="1"/>
</dbReference>
<dbReference type="InterPro" id="IPR011761">
    <property type="entry name" value="ATP-grasp"/>
</dbReference>
<dbReference type="InterPro" id="IPR013815">
    <property type="entry name" value="ATP_grasp_subdomain_1"/>
</dbReference>
<dbReference type="InterPro" id="IPR000291">
    <property type="entry name" value="D-Ala_lig_Van_CS"/>
</dbReference>
<dbReference type="InterPro" id="IPR005905">
    <property type="entry name" value="D_ala_D_ala"/>
</dbReference>
<dbReference type="InterPro" id="IPR011095">
    <property type="entry name" value="Dala_Dala_lig_C"/>
</dbReference>
<dbReference type="InterPro" id="IPR011127">
    <property type="entry name" value="Dala_Dala_lig_N"/>
</dbReference>
<dbReference type="InterPro" id="IPR016185">
    <property type="entry name" value="PreATP-grasp_dom_sf"/>
</dbReference>
<dbReference type="NCBIfam" id="TIGR01205">
    <property type="entry name" value="D_ala_D_alaTIGR"/>
    <property type="match status" value="1"/>
</dbReference>
<dbReference type="NCBIfam" id="NF002527">
    <property type="entry name" value="PRK01966.1-3"/>
    <property type="match status" value="1"/>
</dbReference>
<dbReference type="NCBIfam" id="NF002528">
    <property type="entry name" value="PRK01966.1-4"/>
    <property type="match status" value="1"/>
</dbReference>
<dbReference type="PANTHER" id="PTHR23132">
    <property type="entry name" value="D-ALANINE--D-ALANINE LIGASE"/>
    <property type="match status" value="1"/>
</dbReference>
<dbReference type="PANTHER" id="PTHR23132:SF25">
    <property type="entry name" value="D-ALANINE--D-ALANINE LIGASE A"/>
    <property type="match status" value="1"/>
</dbReference>
<dbReference type="Pfam" id="PF07478">
    <property type="entry name" value="Dala_Dala_lig_C"/>
    <property type="match status" value="1"/>
</dbReference>
<dbReference type="Pfam" id="PF01820">
    <property type="entry name" value="Dala_Dala_lig_N"/>
    <property type="match status" value="1"/>
</dbReference>
<dbReference type="PIRSF" id="PIRSF039102">
    <property type="entry name" value="Ddl/VanB"/>
    <property type="match status" value="1"/>
</dbReference>
<dbReference type="SUPFAM" id="SSF56059">
    <property type="entry name" value="Glutathione synthetase ATP-binding domain-like"/>
    <property type="match status" value="1"/>
</dbReference>
<dbReference type="SUPFAM" id="SSF52440">
    <property type="entry name" value="PreATP-grasp domain"/>
    <property type="match status" value="1"/>
</dbReference>
<dbReference type="PROSITE" id="PS50975">
    <property type="entry name" value="ATP_GRASP"/>
    <property type="match status" value="1"/>
</dbReference>
<dbReference type="PROSITE" id="PS00843">
    <property type="entry name" value="DALA_DALA_LIGASE_1"/>
    <property type="match status" value="1"/>
</dbReference>
<dbReference type="PROSITE" id="PS00844">
    <property type="entry name" value="DALA_DALA_LIGASE_2"/>
    <property type="match status" value="1"/>
</dbReference>
<evidence type="ECO:0000250" key="1"/>
<evidence type="ECO:0000255" key="2">
    <source>
        <dbReference type="HAMAP-Rule" id="MF_00047"/>
    </source>
</evidence>